<organism>
    <name type="scientific">Saccharomyces cerevisiae (strain ATCC 204508 / S288c)</name>
    <name type="common">Baker's yeast</name>
    <dbReference type="NCBI Taxonomy" id="559292"/>
    <lineage>
        <taxon>Eukaryota</taxon>
        <taxon>Fungi</taxon>
        <taxon>Dikarya</taxon>
        <taxon>Ascomycota</taxon>
        <taxon>Saccharomycotina</taxon>
        <taxon>Saccharomycetes</taxon>
        <taxon>Saccharomycetales</taxon>
        <taxon>Saccharomycetaceae</taxon>
        <taxon>Saccharomyces</taxon>
    </lineage>
</organism>
<dbReference type="EMBL" id="Z75280">
    <property type="protein sequence ID" value="CAA99703.1"/>
    <property type="molecule type" value="Genomic_DNA"/>
</dbReference>
<dbReference type="EMBL" id="BK006948">
    <property type="protein sequence ID" value="DAA11131.1"/>
    <property type="molecule type" value="Genomic_DNA"/>
</dbReference>
<dbReference type="PIR" id="S67284">
    <property type="entry name" value="S67284"/>
</dbReference>
<dbReference type="RefSeq" id="NP_015017.1">
    <property type="nucleotide sequence ID" value="NM_001183792.1"/>
</dbReference>
<dbReference type="BioGRID" id="34755">
    <property type="interactions" value="31"/>
</dbReference>
<dbReference type="DIP" id="DIP-1806N"/>
<dbReference type="FunCoup" id="Q08887">
    <property type="interactions" value="244"/>
</dbReference>
<dbReference type="IntAct" id="Q08887">
    <property type="interactions" value="6"/>
</dbReference>
<dbReference type="MINT" id="Q08887"/>
<dbReference type="STRING" id="4932.YOR372C"/>
<dbReference type="GlyGen" id="Q08887">
    <property type="glycosylation" value="1 site, 1 O-linked glycan (1 site)"/>
</dbReference>
<dbReference type="iPTMnet" id="Q08887"/>
<dbReference type="PaxDb" id="4932-YOR372C"/>
<dbReference type="PeptideAtlas" id="Q08887"/>
<dbReference type="EnsemblFungi" id="YOR372C_mRNA">
    <property type="protein sequence ID" value="YOR372C"/>
    <property type="gene ID" value="YOR372C"/>
</dbReference>
<dbReference type="GeneID" id="854554"/>
<dbReference type="KEGG" id="sce:YOR372C"/>
<dbReference type="AGR" id="SGD:S000005899"/>
<dbReference type="SGD" id="S000005899">
    <property type="gene designation" value="NDD1"/>
</dbReference>
<dbReference type="VEuPathDB" id="FungiDB:YOR372C"/>
<dbReference type="eggNOG" id="ENOG502RUKY">
    <property type="taxonomic scope" value="Eukaryota"/>
</dbReference>
<dbReference type="HOGENOM" id="CLU_023935_0_0_1"/>
<dbReference type="InParanoid" id="Q08887"/>
<dbReference type="OMA" id="TQFPTPY"/>
<dbReference type="OrthoDB" id="4063682at2759"/>
<dbReference type="BioCyc" id="YEAST:G3O-33840-MONOMER"/>
<dbReference type="BioGRID-ORCS" id="854554">
    <property type="hits" value="5 hits in 10 CRISPR screens"/>
</dbReference>
<dbReference type="PRO" id="PR:Q08887"/>
<dbReference type="Proteomes" id="UP000002311">
    <property type="component" value="Chromosome XV"/>
</dbReference>
<dbReference type="RNAct" id="Q08887">
    <property type="molecule type" value="protein"/>
</dbReference>
<dbReference type="GO" id="GO:0005737">
    <property type="term" value="C:cytoplasm"/>
    <property type="evidence" value="ECO:0007669"/>
    <property type="project" value="UniProtKB-SubCell"/>
</dbReference>
<dbReference type="GO" id="GO:0005634">
    <property type="term" value="C:nucleus"/>
    <property type="evidence" value="ECO:0000314"/>
    <property type="project" value="SGD"/>
</dbReference>
<dbReference type="GO" id="GO:0003713">
    <property type="term" value="F:transcription coactivator activity"/>
    <property type="evidence" value="ECO:0000314"/>
    <property type="project" value="SGD"/>
</dbReference>
<dbReference type="GO" id="GO:0000086">
    <property type="term" value="P:G2/M transition of mitotic cell cycle"/>
    <property type="evidence" value="ECO:0000315"/>
    <property type="project" value="SGD"/>
</dbReference>
<dbReference type="GO" id="GO:0045944">
    <property type="term" value="P:positive regulation of transcription by RNA polymerase II"/>
    <property type="evidence" value="ECO:0000315"/>
    <property type="project" value="SGD"/>
</dbReference>
<proteinExistence type="evidence at protein level"/>
<gene>
    <name type="primary">NDD1</name>
    <name type="ordered locus">YOR372C</name>
</gene>
<name>NDD1_YEAST</name>
<comment type="function">
    <text evidence="2 3 4 5 6 9 10">Transcription activator involved in G2/M transcription through its association with FKH2.</text>
</comment>
<comment type="subunit">
    <text>Forms an activator complex with FKH2.</text>
</comment>
<comment type="subcellular location">
    <subcellularLocation>
        <location evidence="7">Cytoplasm</location>
    </subcellularLocation>
    <subcellularLocation>
        <location evidence="2">Nucleus</location>
    </subcellularLocation>
</comment>
<comment type="induction">
    <text evidence="2 10">During S phase of the cell cycle. Expression is cell cycle regulated by HCM1.</text>
</comment>
<comment type="PTM">
    <text evidence="5 6">Phosphorylation of Thr-319 by CDC28 is required for the interaction with FKH2 and recruitment to promoters.</text>
</comment>
<comment type="miscellaneous">
    <text evidence="8">Present with 779 molecules/cell in log phase SD medium.</text>
</comment>
<evidence type="ECO:0000256" key="1">
    <source>
        <dbReference type="SAM" id="MobiDB-lite"/>
    </source>
</evidence>
<evidence type="ECO:0000269" key="2">
    <source>
    </source>
</evidence>
<evidence type="ECO:0000269" key="3">
    <source>
    </source>
</evidence>
<evidence type="ECO:0000269" key="4">
    <source>
    </source>
</evidence>
<evidence type="ECO:0000269" key="5">
    <source>
    </source>
</evidence>
<evidence type="ECO:0000269" key="6">
    <source>
    </source>
</evidence>
<evidence type="ECO:0000269" key="7">
    <source>
    </source>
</evidence>
<evidence type="ECO:0000269" key="8">
    <source>
    </source>
</evidence>
<evidence type="ECO:0000269" key="9">
    <source>
    </source>
</evidence>
<evidence type="ECO:0000269" key="10">
    <source>
    </source>
</evidence>
<evidence type="ECO:0007744" key="11">
    <source>
    </source>
</evidence>
<reference key="1">
    <citation type="journal article" date="1997" name="Nature">
        <title>The nucleotide sequence of Saccharomyces cerevisiae chromosome XV.</title>
        <authorList>
            <person name="Dujon B."/>
            <person name="Albermann K."/>
            <person name="Aldea M."/>
            <person name="Alexandraki D."/>
            <person name="Ansorge W."/>
            <person name="Arino J."/>
            <person name="Benes V."/>
            <person name="Bohn C."/>
            <person name="Bolotin-Fukuhara M."/>
            <person name="Bordonne R."/>
            <person name="Boyer J."/>
            <person name="Camasses A."/>
            <person name="Casamayor A."/>
            <person name="Casas C."/>
            <person name="Cheret G."/>
            <person name="Cziepluch C."/>
            <person name="Daignan-Fornier B."/>
            <person name="Dang V.-D."/>
            <person name="de Haan M."/>
            <person name="Delius H."/>
            <person name="Durand P."/>
            <person name="Fairhead C."/>
            <person name="Feldmann H."/>
            <person name="Gaillon L."/>
            <person name="Galisson F."/>
            <person name="Gamo F.-J."/>
            <person name="Gancedo C."/>
            <person name="Goffeau A."/>
            <person name="Goulding S.E."/>
            <person name="Grivell L.A."/>
            <person name="Habbig B."/>
            <person name="Hand N.J."/>
            <person name="Hani J."/>
            <person name="Hattenhorst U."/>
            <person name="Hebling U."/>
            <person name="Hernando Y."/>
            <person name="Herrero E."/>
            <person name="Heumann K."/>
            <person name="Hiesel R."/>
            <person name="Hilger F."/>
            <person name="Hofmann B."/>
            <person name="Hollenberg C.P."/>
            <person name="Hughes B."/>
            <person name="Jauniaux J.-C."/>
            <person name="Kalogeropoulos A."/>
            <person name="Katsoulou C."/>
            <person name="Kordes E."/>
            <person name="Lafuente M.J."/>
            <person name="Landt O."/>
            <person name="Louis E.J."/>
            <person name="Maarse A.C."/>
            <person name="Madania A."/>
            <person name="Mannhaupt G."/>
            <person name="Marck C."/>
            <person name="Martin R.P."/>
            <person name="Mewes H.-W."/>
            <person name="Michaux G."/>
            <person name="Paces V."/>
            <person name="Parle-McDermott A.G."/>
            <person name="Pearson B.M."/>
            <person name="Perrin A."/>
            <person name="Pettersson B."/>
            <person name="Poch O."/>
            <person name="Pohl T.M."/>
            <person name="Poirey R."/>
            <person name="Portetelle D."/>
            <person name="Pujol A."/>
            <person name="Purnelle B."/>
            <person name="Ramezani Rad M."/>
            <person name="Rechmann S."/>
            <person name="Schwager C."/>
            <person name="Schweizer M."/>
            <person name="Sor F."/>
            <person name="Sterky F."/>
            <person name="Tarassov I.A."/>
            <person name="Teodoru C."/>
            <person name="Tettelin H."/>
            <person name="Thierry A."/>
            <person name="Tobiasch E."/>
            <person name="Tzermia M."/>
            <person name="Uhlen M."/>
            <person name="Unseld M."/>
            <person name="Valens M."/>
            <person name="Vandenbol M."/>
            <person name="Vetter I."/>
            <person name="Vlcek C."/>
            <person name="Voet M."/>
            <person name="Volckaert G."/>
            <person name="Voss H."/>
            <person name="Wambutt R."/>
            <person name="Wedler H."/>
            <person name="Wiemann S."/>
            <person name="Winsor B."/>
            <person name="Wolfe K.H."/>
            <person name="Zollner A."/>
            <person name="Zumstein E."/>
            <person name="Kleine K."/>
        </authorList>
    </citation>
    <scope>NUCLEOTIDE SEQUENCE [LARGE SCALE GENOMIC DNA]</scope>
    <source>
        <strain>ATCC 204508 / S288c</strain>
    </source>
</reference>
<reference key="2">
    <citation type="journal article" date="2014" name="G3 (Bethesda)">
        <title>The reference genome sequence of Saccharomyces cerevisiae: Then and now.</title>
        <authorList>
            <person name="Engel S.R."/>
            <person name="Dietrich F.S."/>
            <person name="Fisk D.G."/>
            <person name="Binkley G."/>
            <person name="Balakrishnan R."/>
            <person name="Costanzo M.C."/>
            <person name="Dwight S.S."/>
            <person name="Hitz B.C."/>
            <person name="Karra K."/>
            <person name="Nash R.S."/>
            <person name="Weng S."/>
            <person name="Wong E.D."/>
            <person name="Lloyd P."/>
            <person name="Skrzypek M.S."/>
            <person name="Miyasato S.R."/>
            <person name="Simison M."/>
            <person name="Cherry J.M."/>
        </authorList>
    </citation>
    <scope>GENOME REANNOTATION</scope>
    <source>
        <strain>ATCC 204508 / S288c</strain>
    </source>
</reference>
<reference key="3">
    <citation type="journal article" date="1999" name="Mol. Cell. Biol.">
        <title>NDD1, a high-dosage suppressor of cdc28-1N, is essential for expression of a subset of late-S-phase-specific genes in Saccharomyces cerevisiae.</title>
        <authorList>
            <person name="Loy C.J."/>
            <person name="Lydall D."/>
            <person name="Surana U."/>
        </authorList>
    </citation>
    <scope>FUNCTION</scope>
    <scope>SUBCELLULAR LOCATION</scope>
    <scope>INDUCTION</scope>
</reference>
<reference key="4">
    <citation type="journal article" date="2000" name="Nature">
        <title>Forkhead-like transcription factors recruit Ndd1 to the chromatin of G2/M-specific promoters.</title>
        <authorList>
            <person name="Koranda M."/>
            <person name="Schleiffer A."/>
            <person name="Endler L."/>
            <person name="Ammerer G."/>
        </authorList>
    </citation>
    <scope>FUNCTION</scope>
</reference>
<reference key="5">
    <citation type="journal article" date="2001" name="Cell">
        <title>Serial regulation of transcriptional regulators in the yeast cell cycle.</title>
        <authorList>
            <person name="Simon I."/>
            <person name="Barnett J."/>
            <person name="Hannett N."/>
            <person name="Harbison C.T."/>
            <person name="Rinaldi N.J."/>
            <person name="Volkert T.L."/>
            <person name="Wyrick J.J."/>
            <person name="Zeitlinger J."/>
            <person name="Gifford D.K."/>
            <person name="Jaakkola T.S."/>
            <person name="Young R.A."/>
        </authorList>
    </citation>
    <scope>FUNCTION</scope>
</reference>
<reference key="6">
    <citation type="journal article" date="2002" name="Genes Dev.">
        <title>Saccharomyces forkhead protein Fkh1 regulates donor preference during mating-type switching through the recombination enhancer.</title>
        <authorList>
            <person name="Sun K."/>
            <person name="Coic E."/>
            <person name="Zhou Z."/>
            <person name="Durrens P."/>
            <person name="Haber J.E."/>
        </authorList>
    </citation>
    <scope>RECRUITMENT TO PROMOTER</scope>
</reference>
<reference key="7">
    <citation type="journal article" date="2003" name="Curr. Biol.">
        <title>Cell cycle-regulated transcription through the FHA domain of Fkh2p and the coactivator Ndd1p.</title>
        <authorList>
            <person name="Darieva Z."/>
            <person name="Pic-Taylor A."/>
            <person name="Boros J."/>
            <person name="Spanos A."/>
            <person name="Geymonat M."/>
            <person name="Reece R.J."/>
            <person name="Sedgwick S.G."/>
            <person name="Sharrocks A.D."/>
            <person name="Morgan B.A."/>
        </authorList>
    </citation>
    <scope>FUNCTION</scope>
    <scope>PHOSPHORYLATION</scope>
</reference>
<reference key="8">
    <citation type="journal article" date="2003" name="Genes Dev.">
        <title>Recruitment of Thr 319-phosphorylated Ndd1p to the FHA domain of Fkh2p requires Clb kinase activity: a mechanism for CLB cluster gene activation.</title>
        <authorList>
            <person name="Reynolds D."/>
            <person name="Shi B.J."/>
            <person name="McLean C."/>
            <person name="Katsis F."/>
            <person name="Kemp B."/>
            <person name="Dalton S."/>
        </authorList>
    </citation>
    <scope>FUNCTION</scope>
    <scope>INTERACTION WITH FKH2</scope>
    <scope>PHOSPHORYLATION AT THR-319</scope>
    <scope>MUTAGENESIS OF THR-319</scope>
</reference>
<reference key="9">
    <citation type="journal article" date="2003" name="Nature">
        <title>Global analysis of protein localization in budding yeast.</title>
        <authorList>
            <person name="Huh W.-K."/>
            <person name="Falvo J.V."/>
            <person name="Gerke L.C."/>
            <person name="Carroll A.S."/>
            <person name="Howson R.W."/>
            <person name="Weissman J.S."/>
            <person name="O'Shea E.K."/>
        </authorList>
    </citation>
    <scope>SUBCELLULAR LOCATION [LARGE SCALE ANALYSIS]</scope>
</reference>
<reference key="10">
    <citation type="journal article" date="2003" name="Nature">
        <title>Global analysis of protein expression in yeast.</title>
        <authorList>
            <person name="Ghaemmaghami S."/>
            <person name="Huh W.-K."/>
            <person name="Bower K."/>
            <person name="Howson R.W."/>
            <person name="Belle A."/>
            <person name="Dephoure N."/>
            <person name="O'Shea E.K."/>
            <person name="Weissman J.S."/>
        </authorList>
    </citation>
    <scope>LEVEL OF PROTEIN EXPRESSION [LARGE SCALE ANALYSIS]</scope>
</reference>
<reference key="11">
    <citation type="journal article" date="2005" name="BMC Genomics">
        <title>Inferring yeast cell cycle regulators and interactions using transcription factor activities.</title>
        <authorList>
            <person name="Yang Y.-L."/>
            <person name="Suen J."/>
            <person name="Brynildsen M.P."/>
            <person name="Galbraith S.J."/>
            <person name="Liao J.C."/>
        </authorList>
    </citation>
    <scope>FUNCTION</scope>
</reference>
<reference key="12">
    <citation type="journal article" date="2006" name="Genes Dev.">
        <title>The Forkhead transcription factor Hcm1 regulates chromosome segregation genes and fills the S-phase gap in the transcriptional circuitry of the cell cycle.</title>
        <authorList>
            <person name="Pramila T."/>
            <person name="Wu W."/>
            <person name="Miles S."/>
            <person name="Noble W.S."/>
            <person name="Breeden L.L."/>
        </authorList>
    </citation>
    <scope>FUNCTION</scope>
    <scope>INDUCTION</scope>
</reference>
<reference key="13">
    <citation type="journal article" date="2008" name="Mol. Cell. Proteomics">
        <title>A multidimensional chromatography technology for in-depth phosphoproteome analysis.</title>
        <authorList>
            <person name="Albuquerque C.P."/>
            <person name="Smolka M.B."/>
            <person name="Payne S.H."/>
            <person name="Bafna V."/>
            <person name="Eng J."/>
            <person name="Zhou H."/>
        </authorList>
    </citation>
    <scope>PHOSPHORYLATION [LARGE SCALE ANALYSIS] AT THR-319</scope>
    <scope>IDENTIFICATION BY MASS SPECTROMETRY [LARGE SCALE ANALYSIS]</scope>
</reference>
<sequence>MDRDISYQQNYTSTGATATSSRQPSTDNNADTNFLKVMSEFKYNFNSPLPTTTQFPTPYSSNQYQQTQDHFANTDAHNSSSNESSLVENSILPHHQQIQQQQQQQQQQQQQQQALGSLVPPAVTRTDTSETLDDINVQPSSVLQFGNSLPSEFLVASPEQFKEFLLDSPSTNFNFFHKTPAKTPLRFVTDSNGAQQSTTENPGQQQNVFSNVDLNNLLKSNGKTPSSSCTGAFSRTPLSKIDMNLMFNQPLPTSPSKRFSSLSLTPYGRKILNDVGTPYAKALISSNSALVDFQKARKDITTNATSIGLENANNILQRTPLRSNNKKLFIKTPQDTINSTSTLTKDNENKQDIYGSSPTTIQLNSSITKSISKLDNSRIPLLASRSDNILDSNVDDQLFDLGLTRLPLSPTPNCNSLHSTTTGTSALQIPELPKMGSFRSDTGINPISSSNTVSFKSKSGNNNSKGRIKKNGKKPSKFQIIVANIDQFNQDTSSSSLSSSLNASSSAGNSNSNVTKKRASKLKRSQSLLSDSGSKSQARKSCNSKSNGNLFNSQ</sequence>
<protein>
    <recommendedName>
        <fullName>Nuclear division defective protein 1</fullName>
    </recommendedName>
</protein>
<feature type="chain" id="PRO_0000268686" description="Nuclear division defective protein 1">
    <location>
        <begin position="1"/>
        <end position="554"/>
    </location>
</feature>
<feature type="region of interest" description="Disordered" evidence="1">
    <location>
        <begin position="1"/>
        <end position="31"/>
    </location>
</feature>
<feature type="region of interest" description="Disordered" evidence="1">
    <location>
        <begin position="98"/>
        <end position="117"/>
    </location>
</feature>
<feature type="region of interest" description="Disordered" evidence="1">
    <location>
        <begin position="410"/>
        <end position="475"/>
    </location>
</feature>
<feature type="region of interest" description="Disordered" evidence="1">
    <location>
        <begin position="493"/>
        <end position="554"/>
    </location>
</feature>
<feature type="compositionally biased region" description="Low complexity" evidence="1">
    <location>
        <begin position="98"/>
        <end position="113"/>
    </location>
</feature>
<feature type="compositionally biased region" description="Polar residues" evidence="1">
    <location>
        <begin position="411"/>
        <end position="427"/>
    </location>
</feature>
<feature type="compositionally biased region" description="Low complexity" evidence="1">
    <location>
        <begin position="448"/>
        <end position="465"/>
    </location>
</feature>
<feature type="compositionally biased region" description="Basic residues" evidence="1">
    <location>
        <begin position="466"/>
        <end position="475"/>
    </location>
</feature>
<feature type="compositionally biased region" description="Low complexity" evidence="1">
    <location>
        <begin position="493"/>
        <end position="513"/>
    </location>
</feature>
<feature type="compositionally biased region" description="Basic residues" evidence="1">
    <location>
        <begin position="515"/>
        <end position="524"/>
    </location>
</feature>
<feature type="compositionally biased region" description="Low complexity" evidence="1">
    <location>
        <begin position="525"/>
        <end position="536"/>
    </location>
</feature>
<feature type="compositionally biased region" description="Polar residues" evidence="1">
    <location>
        <begin position="539"/>
        <end position="554"/>
    </location>
</feature>
<feature type="modified residue" description="Phosphothreonine; by CDC28" evidence="5 11">
    <location>
        <position position="319"/>
    </location>
</feature>
<feature type="mutagenesis site" description="Growth delay." evidence="5">
    <original>T</original>
    <variation>A</variation>
    <location>
        <position position="319"/>
    </location>
</feature>
<accession>Q08887</accession>
<accession>D6W365</accession>
<keyword id="KW-0010">Activator</keyword>
<keyword id="KW-0963">Cytoplasm</keyword>
<keyword id="KW-0539">Nucleus</keyword>
<keyword id="KW-0597">Phosphoprotein</keyword>
<keyword id="KW-1185">Reference proteome</keyword>
<keyword id="KW-0804">Transcription</keyword>
<keyword id="KW-0805">Transcription regulation</keyword>